<keyword id="KW-0012">Acyltransferase</keyword>
<keyword id="KW-0963">Cytoplasm</keyword>
<keyword id="KW-0808">Transferase</keyword>
<name>LIPB_BURO1</name>
<evidence type="ECO:0000255" key="1">
    <source>
        <dbReference type="HAMAP-Rule" id="MF_00013"/>
    </source>
</evidence>
<evidence type="ECO:0000255" key="2">
    <source>
        <dbReference type="PROSITE-ProRule" id="PRU01067"/>
    </source>
</evidence>
<proteinExistence type="inferred from homology"/>
<sequence length="251" mass="26585">MSVSPVSIVSTPVAVSASPAGAPDQPVQPVTVRWRGREAYEASFDAMRAFTDTRTADTGDEIWVVEHPPVYTLGQAGDPAHLLVADSGVPLVKVDRGGQITYHGPGQIVVYLLLDLRRRKLMVRALVTKIEEAVIETLAAYNLASVRKAGAPGIYVASGVHEGAKIAALGLKIRNGCSYHGLSLNVKMDLRPFLAINPCGYAGLETVDMASLEVAADWNDVAHTLVGRLIANLDGASAAADKPHALEQSND</sequence>
<accession>Q1BT81</accession>
<feature type="chain" id="PRO_1000089441" description="Octanoyltransferase">
    <location>
        <begin position="1"/>
        <end position="251"/>
    </location>
</feature>
<feature type="domain" description="BPL/LPL catalytic" evidence="2">
    <location>
        <begin position="56"/>
        <end position="241"/>
    </location>
</feature>
<feature type="active site" description="Acyl-thioester intermediate" evidence="1">
    <location>
        <position position="199"/>
    </location>
</feature>
<feature type="binding site" evidence="1">
    <location>
        <begin position="96"/>
        <end position="103"/>
    </location>
    <ligand>
        <name>substrate</name>
    </ligand>
</feature>
<feature type="binding site" evidence="1">
    <location>
        <begin position="168"/>
        <end position="170"/>
    </location>
    <ligand>
        <name>substrate</name>
    </ligand>
</feature>
<feature type="binding site" evidence="1">
    <location>
        <begin position="181"/>
        <end position="183"/>
    </location>
    <ligand>
        <name>substrate</name>
    </ligand>
</feature>
<feature type="site" description="Lowers pKa of active site Cys" evidence="1">
    <location>
        <position position="165"/>
    </location>
</feature>
<protein>
    <recommendedName>
        <fullName evidence="1">Octanoyltransferase</fullName>
        <ecNumber evidence="1">2.3.1.181</ecNumber>
    </recommendedName>
    <alternativeName>
        <fullName evidence="1">Lipoate-protein ligase B</fullName>
    </alternativeName>
    <alternativeName>
        <fullName evidence="1">Lipoyl/octanoyl transferase</fullName>
    </alternativeName>
    <alternativeName>
        <fullName evidence="1">Octanoyl-[acyl-carrier-protein]-protein N-octanoyltransferase</fullName>
    </alternativeName>
</protein>
<comment type="function">
    <text evidence="1">Catalyzes the transfer of endogenously produced octanoic acid from octanoyl-acyl-carrier-protein onto the lipoyl domains of lipoate-dependent enzymes. Lipoyl-ACP can also act as a substrate although octanoyl-ACP is likely to be the physiological substrate.</text>
</comment>
<comment type="catalytic activity">
    <reaction evidence="1">
        <text>octanoyl-[ACP] + L-lysyl-[protein] = N(6)-octanoyl-L-lysyl-[protein] + holo-[ACP] + H(+)</text>
        <dbReference type="Rhea" id="RHEA:17665"/>
        <dbReference type="Rhea" id="RHEA-COMP:9636"/>
        <dbReference type="Rhea" id="RHEA-COMP:9685"/>
        <dbReference type="Rhea" id="RHEA-COMP:9752"/>
        <dbReference type="Rhea" id="RHEA-COMP:9928"/>
        <dbReference type="ChEBI" id="CHEBI:15378"/>
        <dbReference type="ChEBI" id="CHEBI:29969"/>
        <dbReference type="ChEBI" id="CHEBI:64479"/>
        <dbReference type="ChEBI" id="CHEBI:78463"/>
        <dbReference type="ChEBI" id="CHEBI:78809"/>
        <dbReference type="EC" id="2.3.1.181"/>
    </reaction>
</comment>
<comment type="pathway">
    <text evidence="1">Protein modification; protein lipoylation via endogenous pathway; protein N(6)-(lipoyl)lysine from octanoyl-[acyl-carrier-protein]: step 1/2.</text>
</comment>
<comment type="subcellular location">
    <subcellularLocation>
        <location evidence="1">Cytoplasm</location>
    </subcellularLocation>
</comment>
<comment type="miscellaneous">
    <text evidence="1">In the reaction, the free carboxyl group of octanoic acid is attached via an amide linkage to the epsilon-amino group of a specific lysine residue of lipoyl domains of lipoate-dependent enzymes.</text>
</comment>
<comment type="similarity">
    <text evidence="1">Belongs to the LipB family.</text>
</comment>
<reference key="1">
    <citation type="submission" date="2006-05" db="EMBL/GenBank/DDBJ databases">
        <title>Complete sequence of chromosome 1 of Burkholderia cenocepacia AU 1054.</title>
        <authorList>
            <consortium name="US DOE Joint Genome Institute"/>
            <person name="Copeland A."/>
            <person name="Lucas S."/>
            <person name="Lapidus A."/>
            <person name="Barry K."/>
            <person name="Detter J.C."/>
            <person name="Glavina del Rio T."/>
            <person name="Hammon N."/>
            <person name="Israni S."/>
            <person name="Dalin E."/>
            <person name="Tice H."/>
            <person name="Pitluck S."/>
            <person name="Chain P."/>
            <person name="Malfatti S."/>
            <person name="Shin M."/>
            <person name="Vergez L."/>
            <person name="Schmutz J."/>
            <person name="Larimer F."/>
            <person name="Land M."/>
            <person name="Hauser L."/>
            <person name="Kyrpides N."/>
            <person name="Lykidis A."/>
            <person name="LiPuma J.J."/>
            <person name="Konstantinidis K."/>
            <person name="Tiedje J.M."/>
            <person name="Richardson P."/>
        </authorList>
    </citation>
    <scope>NUCLEOTIDE SEQUENCE [LARGE SCALE GENOMIC DNA]</scope>
    <source>
        <strain>AU 1054</strain>
    </source>
</reference>
<dbReference type="EC" id="2.3.1.181" evidence="1"/>
<dbReference type="EMBL" id="CP000378">
    <property type="protein sequence ID" value="ABF77174.1"/>
    <property type="molecule type" value="Genomic_DNA"/>
</dbReference>
<dbReference type="SMR" id="Q1BT81"/>
<dbReference type="HOGENOM" id="CLU_035168_3_1_4"/>
<dbReference type="UniPathway" id="UPA00538">
    <property type="reaction ID" value="UER00592"/>
</dbReference>
<dbReference type="GO" id="GO:0005737">
    <property type="term" value="C:cytoplasm"/>
    <property type="evidence" value="ECO:0007669"/>
    <property type="project" value="UniProtKB-SubCell"/>
</dbReference>
<dbReference type="GO" id="GO:0033819">
    <property type="term" value="F:lipoyl(octanoyl) transferase activity"/>
    <property type="evidence" value="ECO:0007669"/>
    <property type="project" value="UniProtKB-EC"/>
</dbReference>
<dbReference type="GO" id="GO:0036211">
    <property type="term" value="P:protein modification process"/>
    <property type="evidence" value="ECO:0007669"/>
    <property type="project" value="InterPro"/>
</dbReference>
<dbReference type="CDD" id="cd16444">
    <property type="entry name" value="LipB"/>
    <property type="match status" value="1"/>
</dbReference>
<dbReference type="FunFam" id="3.30.930.10:FF:000020">
    <property type="entry name" value="Octanoyltransferase"/>
    <property type="match status" value="1"/>
</dbReference>
<dbReference type="Gene3D" id="3.30.930.10">
    <property type="entry name" value="Bira Bifunctional Protein, Domain 2"/>
    <property type="match status" value="1"/>
</dbReference>
<dbReference type="HAMAP" id="MF_00013">
    <property type="entry name" value="LipB"/>
    <property type="match status" value="1"/>
</dbReference>
<dbReference type="InterPro" id="IPR045864">
    <property type="entry name" value="aa-tRNA-synth_II/BPL/LPL"/>
</dbReference>
<dbReference type="InterPro" id="IPR004143">
    <property type="entry name" value="BPL_LPL_catalytic"/>
</dbReference>
<dbReference type="InterPro" id="IPR000544">
    <property type="entry name" value="Octanoyltransferase"/>
</dbReference>
<dbReference type="InterPro" id="IPR020605">
    <property type="entry name" value="Octanoyltransferase_CS"/>
</dbReference>
<dbReference type="NCBIfam" id="TIGR00214">
    <property type="entry name" value="lipB"/>
    <property type="match status" value="1"/>
</dbReference>
<dbReference type="NCBIfam" id="NF010922">
    <property type="entry name" value="PRK14342.1"/>
    <property type="match status" value="1"/>
</dbReference>
<dbReference type="NCBIfam" id="NF010923">
    <property type="entry name" value="PRK14343.1"/>
    <property type="match status" value="1"/>
</dbReference>
<dbReference type="PANTHER" id="PTHR10993:SF7">
    <property type="entry name" value="LIPOYLTRANSFERASE 2, MITOCHONDRIAL-RELATED"/>
    <property type="match status" value="1"/>
</dbReference>
<dbReference type="PANTHER" id="PTHR10993">
    <property type="entry name" value="OCTANOYLTRANSFERASE"/>
    <property type="match status" value="1"/>
</dbReference>
<dbReference type="Pfam" id="PF21948">
    <property type="entry name" value="LplA-B_cat"/>
    <property type="match status" value="1"/>
</dbReference>
<dbReference type="PIRSF" id="PIRSF016262">
    <property type="entry name" value="LPLase"/>
    <property type="match status" value="1"/>
</dbReference>
<dbReference type="SUPFAM" id="SSF55681">
    <property type="entry name" value="Class II aaRS and biotin synthetases"/>
    <property type="match status" value="1"/>
</dbReference>
<dbReference type="PROSITE" id="PS51733">
    <property type="entry name" value="BPL_LPL_CATALYTIC"/>
    <property type="match status" value="1"/>
</dbReference>
<dbReference type="PROSITE" id="PS01313">
    <property type="entry name" value="LIPB"/>
    <property type="match status" value="1"/>
</dbReference>
<organism>
    <name type="scientific">Burkholderia orbicola (strain AU 1054)</name>
    <dbReference type="NCBI Taxonomy" id="331271"/>
    <lineage>
        <taxon>Bacteria</taxon>
        <taxon>Pseudomonadati</taxon>
        <taxon>Pseudomonadota</taxon>
        <taxon>Betaproteobacteria</taxon>
        <taxon>Burkholderiales</taxon>
        <taxon>Burkholderiaceae</taxon>
        <taxon>Burkholderia</taxon>
        <taxon>Burkholderia cepacia complex</taxon>
        <taxon>Burkholderia orbicola</taxon>
    </lineage>
</organism>
<gene>
    <name evidence="1" type="primary">lipB</name>
    <name type="ordered locus">Bcen_2273</name>
</gene>